<reference key="1">
    <citation type="journal article" date="2003" name="Science">
        <title>Role of mobile DNA in the evolution of vancomycin-resistant Enterococcus faecalis.</title>
        <authorList>
            <person name="Paulsen I.T."/>
            <person name="Banerjei L."/>
            <person name="Myers G.S.A."/>
            <person name="Nelson K.E."/>
            <person name="Seshadri R."/>
            <person name="Read T.D."/>
            <person name="Fouts D.E."/>
            <person name="Eisen J.A."/>
            <person name="Gill S.R."/>
            <person name="Heidelberg J.F."/>
            <person name="Tettelin H."/>
            <person name="Dodson R.J."/>
            <person name="Umayam L.A."/>
            <person name="Brinkac L.M."/>
            <person name="Beanan M.J."/>
            <person name="Daugherty S.C."/>
            <person name="DeBoy R.T."/>
            <person name="Durkin S.A."/>
            <person name="Kolonay J.F."/>
            <person name="Madupu R."/>
            <person name="Nelson W.C."/>
            <person name="Vamathevan J.J."/>
            <person name="Tran B."/>
            <person name="Upton J."/>
            <person name="Hansen T."/>
            <person name="Shetty J."/>
            <person name="Khouri H.M."/>
            <person name="Utterback T.R."/>
            <person name="Radune D."/>
            <person name="Ketchum K.A."/>
            <person name="Dougherty B.A."/>
            <person name="Fraser C.M."/>
        </authorList>
    </citation>
    <scope>NUCLEOTIDE SEQUENCE [LARGE SCALE GENOMIC DNA]</scope>
    <source>
        <strain>ATCC 700802 / V583</strain>
    </source>
</reference>
<sequence length="203" mass="23710">MLMFTEKEFAAFEVAGLDERMAVIRAQIQPIFQELDTYFAEQLAPELGTELFVHIAQHRRRTVYPPENTWSALSPNKRGYKMQPHFQLGIWGDYVFMWLSFIDNPKNEKQIAQAFLENQQLFQALPEDTYVSLDHTVPQITPLPETDLEKALTRFRDVKKGEFEIGRIIPKDSDLWQNPEKARAYMLATYQQLLPLYQLAVAQ</sequence>
<name>Y3078_ENTFA</name>
<keyword id="KW-1185">Reference proteome</keyword>
<gene>
    <name type="ordered locus">EF_3078</name>
</gene>
<proteinExistence type="inferred from homology"/>
<protein>
    <recommendedName>
        <fullName evidence="1">UPF0637 protein EF_3078</fullName>
    </recommendedName>
</protein>
<accession>Q82ZH9</accession>
<comment type="similarity">
    <text evidence="1">Belongs to the UPF0637 family.</text>
</comment>
<organism>
    <name type="scientific">Enterococcus faecalis (strain ATCC 700802 / V583)</name>
    <dbReference type="NCBI Taxonomy" id="226185"/>
    <lineage>
        <taxon>Bacteria</taxon>
        <taxon>Bacillati</taxon>
        <taxon>Bacillota</taxon>
        <taxon>Bacilli</taxon>
        <taxon>Lactobacillales</taxon>
        <taxon>Enterococcaceae</taxon>
        <taxon>Enterococcus</taxon>
    </lineage>
</organism>
<dbReference type="EMBL" id="AE016830">
    <property type="protein sequence ID" value="AAO82759.1"/>
    <property type="molecule type" value="Genomic_DNA"/>
</dbReference>
<dbReference type="RefSeq" id="NP_816689.1">
    <property type="nucleotide sequence ID" value="NC_004668.1"/>
</dbReference>
<dbReference type="RefSeq" id="WP_002359064.1">
    <property type="nucleotide sequence ID" value="NZ_KE136524.1"/>
</dbReference>
<dbReference type="SMR" id="Q82ZH9"/>
<dbReference type="STRING" id="226185.EF_3078"/>
<dbReference type="EnsemblBacteria" id="AAO82759">
    <property type="protein sequence ID" value="AAO82759"/>
    <property type="gene ID" value="EF_3078"/>
</dbReference>
<dbReference type="KEGG" id="efa:EF3078"/>
<dbReference type="PATRIC" id="fig|226185.45.peg.494"/>
<dbReference type="eggNOG" id="COG4493">
    <property type="taxonomic scope" value="Bacteria"/>
</dbReference>
<dbReference type="HOGENOM" id="CLU_096059_0_0_9"/>
<dbReference type="Proteomes" id="UP000001415">
    <property type="component" value="Chromosome"/>
</dbReference>
<dbReference type="Gene3D" id="3.30.930.20">
    <property type="entry name" value="Protein of unknown function DUF1054"/>
    <property type="match status" value="1"/>
</dbReference>
<dbReference type="HAMAP" id="MF_01851">
    <property type="entry name" value="UPF0637"/>
    <property type="match status" value="1"/>
</dbReference>
<dbReference type="InterPro" id="IPR009403">
    <property type="entry name" value="UPF0637"/>
</dbReference>
<dbReference type="InterPro" id="IPR053707">
    <property type="entry name" value="UPF0637_domain_sf"/>
</dbReference>
<dbReference type="Pfam" id="PF06335">
    <property type="entry name" value="DUF1054"/>
    <property type="match status" value="1"/>
</dbReference>
<dbReference type="PIRSF" id="PIRSF021332">
    <property type="entry name" value="DUF1054"/>
    <property type="match status" value="1"/>
</dbReference>
<dbReference type="SUPFAM" id="SSF142913">
    <property type="entry name" value="YktB/PF0168-like"/>
    <property type="match status" value="1"/>
</dbReference>
<feature type="chain" id="PRO_0000348302" description="UPF0637 protein EF_3078">
    <location>
        <begin position="1"/>
        <end position="203"/>
    </location>
</feature>
<evidence type="ECO:0000255" key="1">
    <source>
        <dbReference type="HAMAP-Rule" id="MF_01851"/>
    </source>
</evidence>